<name>HSLU_BURP1</name>
<keyword id="KW-0067">ATP-binding</keyword>
<keyword id="KW-0143">Chaperone</keyword>
<keyword id="KW-0963">Cytoplasm</keyword>
<keyword id="KW-0547">Nucleotide-binding</keyword>
<keyword id="KW-0346">Stress response</keyword>
<feature type="chain" id="PRO_1000012718" description="ATP-dependent protease ATPase subunit HslU">
    <location>
        <begin position="1"/>
        <end position="447"/>
    </location>
</feature>
<feature type="binding site" evidence="1">
    <location>
        <position position="18"/>
    </location>
    <ligand>
        <name>ATP</name>
        <dbReference type="ChEBI" id="CHEBI:30616"/>
    </ligand>
</feature>
<feature type="binding site" evidence="1">
    <location>
        <begin position="60"/>
        <end position="65"/>
    </location>
    <ligand>
        <name>ATP</name>
        <dbReference type="ChEBI" id="CHEBI:30616"/>
    </ligand>
</feature>
<feature type="binding site" evidence="1">
    <location>
        <position position="259"/>
    </location>
    <ligand>
        <name>ATP</name>
        <dbReference type="ChEBI" id="CHEBI:30616"/>
    </ligand>
</feature>
<feature type="binding site" evidence="1">
    <location>
        <position position="325"/>
    </location>
    <ligand>
        <name>ATP</name>
        <dbReference type="ChEBI" id="CHEBI:30616"/>
    </ligand>
</feature>
<feature type="binding site" evidence="1">
    <location>
        <position position="397"/>
    </location>
    <ligand>
        <name>ATP</name>
        <dbReference type="ChEBI" id="CHEBI:30616"/>
    </ligand>
</feature>
<comment type="function">
    <text evidence="1">ATPase subunit of a proteasome-like degradation complex; this subunit has chaperone activity. The binding of ATP and its subsequent hydrolysis by HslU are essential for unfolding of protein substrates subsequently hydrolyzed by HslV. HslU recognizes the N-terminal part of its protein substrates and unfolds these before they are guided to HslV for hydrolysis.</text>
</comment>
<comment type="subunit">
    <text evidence="1">A double ring-shaped homohexamer of HslV is capped on each side by a ring-shaped HslU homohexamer. The assembly of the HslU/HslV complex is dependent on binding of ATP.</text>
</comment>
<comment type="subcellular location">
    <subcellularLocation>
        <location evidence="1">Cytoplasm</location>
    </subcellularLocation>
</comment>
<comment type="similarity">
    <text evidence="1">Belongs to the ClpX chaperone family. HslU subfamily.</text>
</comment>
<protein>
    <recommendedName>
        <fullName evidence="1">ATP-dependent protease ATPase subunit HslU</fullName>
    </recommendedName>
    <alternativeName>
        <fullName evidence="1">Unfoldase HslU</fullName>
    </alternativeName>
</protein>
<gene>
    <name evidence="1" type="primary">hslU</name>
    <name type="ordered locus">BURPS1710b_0385</name>
</gene>
<accession>Q3JXA4</accession>
<organism>
    <name type="scientific">Burkholderia pseudomallei (strain 1710b)</name>
    <dbReference type="NCBI Taxonomy" id="320372"/>
    <lineage>
        <taxon>Bacteria</taxon>
        <taxon>Pseudomonadati</taxon>
        <taxon>Pseudomonadota</taxon>
        <taxon>Betaproteobacteria</taxon>
        <taxon>Burkholderiales</taxon>
        <taxon>Burkholderiaceae</taxon>
        <taxon>Burkholderia</taxon>
        <taxon>pseudomallei group</taxon>
    </lineage>
</organism>
<dbReference type="EMBL" id="CP000124">
    <property type="protein sequence ID" value="ABA51182.1"/>
    <property type="molecule type" value="Genomic_DNA"/>
</dbReference>
<dbReference type="RefSeq" id="WP_004523084.1">
    <property type="nucleotide sequence ID" value="NC_007434.1"/>
</dbReference>
<dbReference type="SMR" id="Q3JXA4"/>
<dbReference type="EnsemblBacteria" id="ABA51182">
    <property type="protein sequence ID" value="ABA51182"/>
    <property type="gene ID" value="BURPS1710b_0385"/>
</dbReference>
<dbReference type="KEGG" id="bpm:BURPS1710b_0385"/>
<dbReference type="HOGENOM" id="CLU_033123_0_0_4"/>
<dbReference type="Proteomes" id="UP000002700">
    <property type="component" value="Chromosome I"/>
</dbReference>
<dbReference type="GO" id="GO:0009376">
    <property type="term" value="C:HslUV protease complex"/>
    <property type="evidence" value="ECO:0007669"/>
    <property type="project" value="UniProtKB-UniRule"/>
</dbReference>
<dbReference type="GO" id="GO:0005524">
    <property type="term" value="F:ATP binding"/>
    <property type="evidence" value="ECO:0007669"/>
    <property type="project" value="UniProtKB-UniRule"/>
</dbReference>
<dbReference type="GO" id="GO:0016887">
    <property type="term" value="F:ATP hydrolysis activity"/>
    <property type="evidence" value="ECO:0007669"/>
    <property type="project" value="InterPro"/>
</dbReference>
<dbReference type="GO" id="GO:0008233">
    <property type="term" value="F:peptidase activity"/>
    <property type="evidence" value="ECO:0007669"/>
    <property type="project" value="InterPro"/>
</dbReference>
<dbReference type="GO" id="GO:0036402">
    <property type="term" value="F:proteasome-activating activity"/>
    <property type="evidence" value="ECO:0007669"/>
    <property type="project" value="UniProtKB-UniRule"/>
</dbReference>
<dbReference type="GO" id="GO:0043335">
    <property type="term" value="P:protein unfolding"/>
    <property type="evidence" value="ECO:0007669"/>
    <property type="project" value="UniProtKB-UniRule"/>
</dbReference>
<dbReference type="GO" id="GO:0051603">
    <property type="term" value="P:proteolysis involved in protein catabolic process"/>
    <property type="evidence" value="ECO:0007669"/>
    <property type="project" value="TreeGrafter"/>
</dbReference>
<dbReference type="CDD" id="cd19498">
    <property type="entry name" value="RecA-like_HslU"/>
    <property type="match status" value="1"/>
</dbReference>
<dbReference type="FunFam" id="3.40.50.300:FF:000213">
    <property type="entry name" value="ATP-dependent protease ATPase subunit HslU"/>
    <property type="match status" value="1"/>
</dbReference>
<dbReference type="FunFam" id="3.40.50.300:FF:000220">
    <property type="entry name" value="ATP-dependent protease ATPase subunit HslU"/>
    <property type="match status" value="1"/>
</dbReference>
<dbReference type="Gene3D" id="1.10.8.60">
    <property type="match status" value="1"/>
</dbReference>
<dbReference type="Gene3D" id="3.40.50.300">
    <property type="entry name" value="P-loop containing nucleotide triphosphate hydrolases"/>
    <property type="match status" value="2"/>
</dbReference>
<dbReference type="HAMAP" id="MF_00249">
    <property type="entry name" value="HslU"/>
    <property type="match status" value="1"/>
</dbReference>
<dbReference type="InterPro" id="IPR003593">
    <property type="entry name" value="AAA+_ATPase"/>
</dbReference>
<dbReference type="InterPro" id="IPR050052">
    <property type="entry name" value="ATP-dep_Clp_protease_ClpX"/>
</dbReference>
<dbReference type="InterPro" id="IPR003959">
    <property type="entry name" value="ATPase_AAA_core"/>
</dbReference>
<dbReference type="InterPro" id="IPR019489">
    <property type="entry name" value="Clp_ATPase_C"/>
</dbReference>
<dbReference type="InterPro" id="IPR004491">
    <property type="entry name" value="HslU"/>
</dbReference>
<dbReference type="InterPro" id="IPR027417">
    <property type="entry name" value="P-loop_NTPase"/>
</dbReference>
<dbReference type="NCBIfam" id="TIGR00390">
    <property type="entry name" value="hslU"/>
    <property type="match status" value="1"/>
</dbReference>
<dbReference type="NCBIfam" id="NF003544">
    <property type="entry name" value="PRK05201.1"/>
    <property type="match status" value="1"/>
</dbReference>
<dbReference type="PANTHER" id="PTHR48102">
    <property type="entry name" value="ATP-DEPENDENT CLP PROTEASE ATP-BINDING SUBUNIT CLPX-LIKE, MITOCHONDRIAL-RELATED"/>
    <property type="match status" value="1"/>
</dbReference>
<dbReference type="PANTHER" id="PTHR48102:SF3">
    <property type="entry name" value="ATP-DEPENDENT PROTEASE ATPASE SUBUNIT HSLU"/>
    <property type="match status" value="1"/>
</dbReference>
<dbReference type="Pfam" id="PF00004">
    <property type="entry name" value="AAA"/>
    <property type="match status" value="1"/>
</dbReference>
<dbReference type="Pfam" id="PF07724">
    <property type="entry name" value="AAA_2"/>
    <property type="match status" value="1"/>
</dbReference>
<dbReference type="SMART" id="SM00382">
    <property type="entry name" value="AAA"/>
    <property type="match status" value="1"/>
</dbReference>
<dbReference type="SMART" id="SM01086">
    <property type="entry name" value="ClpB_D2-small"/>
    <property type="match status" value="1"/>
</dbReference>
<dbReference type="SUPFAM" id="SSF52540">
    <property type="entry name" value="P-loop containing nucleoside triphosphate hydrolases"/>
    <property type="match status" value="1"/>
</dbReference>
<sequence length="447" mass="49710">MSTMTPAEIVSELDKHIIGQAKAKKAVAVALRNRWRRQQVAEPLRQEITPKNILMIGPTGVGKTEIARRLAKLADAPFIKIEATKFTEVGYVGRDVDSIVRDLIEISVKQTRETEMRKVRSKATDLAEDRILDVLLPQPRAVGFGASAEHANDDNNATRQTFRKRLREGQLDDKEIELDIEQPAVGMDIMAPPGMEEMTEQIRSMFSNLGSGKKQRRKVKIKEALKLLTDEEAAKMLNDEEVKTKAVQNVEQNGIVFLDEIDKITSRNHEGGGGEVSRQGVQRDLLPLVEGTTINTKYGMVKTDHILFIASGAFHLAKPSDLIPELQGRFPIRVELDSLSVKDFEAILVATDASLVKQYQALLATEDVKLEFADDGIRRLAEIAYAVNEKTENIGARRLYTVIEKLLEEVSFAAGNHAGQSVTIDSAYVDHALGEVSKDEDLSRYVL</sequence>
<evidence type="ECO:0000255" key="1">
    <source>
        <dbReference type="HAMAP-Rule" id="MF_00249"/>
    </source>
</evidence>
<proteinExistence type="inferred from homology"/>
<reference key="1">
    <citation type="journal article" date="2010" name="Genome Biol. Evol.">
        <title>Continuing evolution of Burkholderia mallei through genome reduction and large-scale rearrangements.</title>
        <authorList>
            <person name="Losada L."/>
            <person name="Ronning C.M."/>
            <person name="DeShazer D."/>
            <person name="Woods D."/>
            <person name="Fedorova N."/>
            <person name="Kim H.S."/>
            <person name="Shabalina S.A."/>
            <person name="Pearson T.R."/>
            <person name="Brinkac L."/>
            <person name="Tan P."/>
            <person name="Nandi T."/>
            <person name="Crabtree J."/>
            <person name="Badger J."/>
            <person name="Beckstrom-Sternberg S."/>
            <person name="Saqib M."/>
            <person name="Schutzer S.E."/>
            <person name="Keim P."/>
            <person name="Nierman W.C."/>
        </authorList>
    </citation>
    <scope>NUCLEOTIDE SEQUENCE [LARGE SCALE GENOMIC DNA]</scope>
    <source>
        <strain>1710b</strain>
    </source>
</reference>